<feature type="chain" id="PRO_1000131856" description="Probable Fe(2+)-trafficking protein">
    <location>
        <begin position="1"/>
        <end position="91"/>
    </location>
</feature>
<comment type="function">
    <text evidence="1">Could be a mediator in iron transactions between iron acquisition and iron-requiring processes, such as synthesis and/or repair of Fe-S clusters in biosynthetic enzymes.</text>
</comment>
<comment type="similarity">
    <text evidence="1">Belongs to the Fe(2+)-trafficking protein family.</text>
</comment>
<proteinExistence type="inferred from homology"/>
<sequence length="91" mass="10278">MARMVHCVKLNKEAEGLDFPPLPGELGKKLWQSVSKEAWAGWLKHQTMLINENRLNMADSRARQYLLKQTEKYFFGDGADEAAGYVPPPSA</sequence>
<dbReference type="EMBL" id="CP001068">
    <property type="protein sequence ID" value="ACD26225.1"/>
    <property type="molecule type" value="Genomic_DNA"/>
</dbReference>
<dbReference type="SMR" id="B2U9W7"/>
<dbReference type="STRING" id="402626.Rpic_1077"/>
<dbReference type="KEGG" id="rpi:Rpic_1077"/>
<dbReference type="eggNOG" id="COG2924">
    <property type="taxonomic scope" value="Bacteria"/>
</dbReference>
<dbReference type="HOGENOM" id="CLU_170994_0_0_4"/>
<dbReference type="GO" id="GO:0005829">
    <property type="term" value="C:cytosol"/>
    <property type="evidence" value="ECO:0007669"/>
    <property type="project" value="TreeGrafter"/>
</dbReference>
<dbReference type="GO" id="GO:0005506">
    <property type="term" value="F:iron ion binding"/>
    <property type="evidence" value="ECO:0007669"/>
    <property type="project" value="UniProtKB-UniRule"/>
</dbReference>
<dbReference type="GO" id="GO:0034599">
    <property type="term" value="P:cellular response to oxidative stress"/>
    <property type="evidence" value="ECO:0007669"/>
    <property type="project" value="TreeGrafter"/>
</dbReference>
<dbReference type="FunFam" id="1.10.3880.10:FF:000001">
    <property type="entry name" value="Probable Fe(2+)-trafficking protein"/>
    <property type="match status" value="1"/>
</dbReference>
<dbReference type="Gene3D" id="1.10.3880.10">
    <property type="entry name" value="Fe(II) trafficking protein YggX"/>
    <property type="match status" value="1"/>
</dbReference>
<dbReference type="HAMAP" id="MF_00686">
    <property type="entry name" value="Fe_traffic_YggX"/>
    <property type="match status" value="1"/>
</dbReference>
<dbReference type="InterPro" id="IPR007457">
    <property type="entry name" value="Fe_traffick_prot_YggX"/>
</dbReference>
<dbReference type="InterPro" id="IPR036766">
    <property type="entry name" value="Fe_traffick_prot_YggX_sf"/>
</dbReference>
<dbReference type="NCBIfam" id="NF003817">
    <property type="entry name" value="PRK05408.1"/>
    <property type="match status" value="1"/>
</dbReference>
<dbReference type="PANTHER" id="PTHR36965">
    <property type="entry name" value="FE(2+)-TRAFFICKING PROTEIN-RELATED"/>
    <property type="match status" value="1"/>
</dbReference>
<dbReference type="PANTHER" id="PTHR36965:SF1">
    <property type="entry name" value="FE(2+)-TRAFFICKING PROTEIN-RELATED"/>
    <property type="match status" value="1"/>
</dbReference>
<dbReference type="Pfam" id="PF04362">
    <property type="entry name" value="Iron_traffic"/>
    <property type="match status" value="1"/>
</dbReference>
<dbReference type="PIRSF" id="PIRSF029827">
    <property type="entry name" value="Fe_traffic_YggX"/>
    <property type="match status" value="1"/>
</dbReference>
<dbReference type="SUPFAM" id="SSF111148">
    <property type="entry name" value="YggX-like"/>
    <property type="match status" value="1"/>
</dbReference>
<organism>
    <name type="scientific">Ralstonia pickettii (strain 12J)</name>
    <dbReference type="NCBI Taxonomy" id="402626"/>
    <lineage>
        <taxon>Bacteria</taxon>
        <taxon>Pseudomonadati</taxon>
        <taxon>Pseudomonadota</taxon>
        <taxon>Betaproteobacteria</taxon>
        <taxon>Burkholderiales</taxon>
        <taxon>Burkholderiaceae</taxon>
        <taxon>Ralstonia</taxon>
    </lineage>
</organism>
<reference key="1">
    <citation type="submission" date="2008-05" db="EMBL/GenBank/DDBJ databases">
        <title>Complete sequence of chromosome 1 of Ralstonia pickettii 12J.</title>
        <authorList>
            <person name="Lucas S."/>
            <person name="Copeland A."/>
            <person name="Lapidus A."/>
            <person name="Glavina del Rio T."/>
            <person name="Dalin E."/>
            <person name="Tice H."/>
            <person name="Bruce D."/>
            <person name="Goodwin L."/>
            <person name="Pitluck S."/>
            <person name="Meincke L."/>
            <person name="Brettin T."/>
            <person name="Detter J.C."/>
            <person name="Han C."/>
            <person name="Kuske C.R."/>
            <person name="Schmutz J."/>
            <person name="Larimer F."/>
            <person name="Land M."/>
            <person name="Hauser L."/>
            <person name="Kyrpides N."/>
            <person name="Mikhailova N."/>
            <person name="Marsh T."/>
            <person name="Richardson P."/>
        </authorList>
    </citation>
    <scope>NUCLEOTIDE SEQUENCE [LARGE SCALE GENOMIC DNA]</scope>
    <source>
        <strain>12J</strain>
    </source>
</reference>
<evidence type="ECO:0000255" key="1">
    <source>
        <dbReference type="HAMAP-Rule" id="MF_00686"/>
    </source>
</evidence>
<name>FETP_RALPJ</name>
<gene>
    <name type="ordered locus">Rpic_1077</name>
</gene>
<accession>B2U9W7</accession>
<protein>
    <recommendedName>
        <fullName evidence="1">Probable Fe(2+)-trafficking protein</fullName>
    </recommendedName>
</protein>
<keyword id="KW-0408">Iron</keyword>